<accession>Q7PA29</accession>
<accession>Q84I65</accession>
<evidence type="ECO:0000255" key="1">
    <source>
        <dbReference type="PROSITE-ProRule" id="PRU00303"/>
    </source>
</evidence>
<evidence type="ECO:0000305" key="2"/>
<comment type="subcellular location">
    <subcellularLocation>
        <location evidence="2">Cell outer membrane</location>
        <topology evidence="2">Lipid-anchor</topology>
    </subcellularLocation>
</comment>
<comment type="similarity">
    <text evidence="2">Belongs to the rickettsiale 17 kDa surface antigen family.</text>
</comment>
<keyword id="KW-0998">Cell outer membrane</keyword>
<keyword id="KW-0449">Lipoprotein</keyword>
<keyword id="KW-0472">Membrane</keyword>
<keyword id="KW-0564">Palmitate</keyword>
<keyword id="KW-0732">Signal</keyword>
<proteinExistence type="inferred from homology"/>
<gene>
    <name type="primary">omp</name>
    <name type="ORF">rsib_orf.806</name>
</gene>
<sequence>MKLLSKIMIIALATSMLQACNGPGGMNKQGTGTLLGGAGGALLGSQFGKGKGQLVGVGVGALLGAVLGGQIGAGMDEQDRRLAELTSQRALETAPSGSNVEWRNPDNGNYGYVTPNKTYRNSTGQYCREYTQTVVIGGKQQKAYGNACRQPDGQWQVVN</sequence>
<feature type="signal peptide" evidence="1">
    <location>
        <begin position="1"/>
        <end position="19"/>
    </location>
</feature>
<feature type="chain" id="PRO_0000277891" description="17 kDa surface antigen">
    <location>
        <begin position="20"/>
        <end position="159"/>
    </location>
</feature>
<feature type="lipid moiety-binding region" description="N-palmitoyl cysteine" evidence="2">
    <location>
        <position position="20"/>
    </location>
</feature>
<feature type="lipid moiety-binding region" description="S-diacylglycerol cysteine" evidence="2">
    <location>
        <position position="20"/>
    </location>
</feature>
<reference key="1">
    <citation type="submission" date="2003-02" db="EMBL/GenBank/DDBJ databases">
        <authorList>
            <person name="Malek J.A."/>
            <person name="Eremeeva M.E."/>
            <person name="Dasch G.A."/>
        </authorList>
    </citation>
    <scope>NUCLEOTIDE SEQUENCE [LARGE SCALE GENOMIC DNA]</scope>
    <source>
        <strain>ATCC VR-151 / 246</strain>
    </source>
</reference>
<reference key="2">
    <citation type="submission" date="2001-11" db="EMBL/GenBank/DDBJ databases">
        <title>Classification of Rickettsia amblyommii sp. nov. isolated from the Lone Star Tick, Amblyomma americanum (Acari: Ixodidae), based upon 17, 120 and 130 kilodalton antigen gene phylogenies.</title>
        <authorList>
            <person name="Stothard D.R."/>
            <person name="Pretzman C.I."/>
            <person name="Fuerst P.A."/>
            <person name="Feng H.-M."/>
            <person name="Walker D.H."/>
            <person name="Bouyer D.H."/>
        </authorList>
    </citation>
    <scope>NUCLEOTIDE SEQUENCE [GENOMIC DNA] OF 1-156</scope>
    <source>
        <strain>ATCC VR-151 / 246</strain>
    </source>
</reference>
<protein>
    <recommendedName>
        <fullName>17 kDa surface antigen</fullName>
    </recommendedName>
</protein>
<dbReference type="EMBL" id="AABW01000001">
    <property type="protein sequence ID" value="EAA26008.1"/>
    <property type="molecule type" value="Genomic_DNA"/>
</dbReference>
<dbReference type="EMBL" id="AF445384">
    <property type="protein sequence ID" value="AAO38436.1"/>
    <property type="molecule type" value="Genomic_DNA"/>
</dbReference>
<dbReference type="RefSeq" id="WP_004997204.1">
    <property type="nucleotide sequence ID" value="NZ_AABW01000001.1"/>
</dbReference>
<dbReference type="HOGENOM" id="CLU_118535_0_0_5"/>
<dbReference type="Proteomes" id="UP000004455">
    <property type="component" value="Unassembled WGS sequence"/>
</dbReference>
<dbReference type="GO" id="GO:0009279">
    <property type="term" value="C:cell outer membrane"/>
    <property type="evidence" value="ECO:0007669"/>
    <property type="project" value="UniProtKB-SubCell"/>
</dbReference>
<dbReference type="InterPro" id="IPR032635">
    <property type="entry name" value="Anti_2"/>
</dbReference>
<dbReference type="InterPro" id="IPR008816">
    <property type="entry name" value="Gly_zipper_2TM_dom"/>
</dbReference>
<dbReference type="InterPro" id="IPR016364">
    <property type="entry name" value="Surface_antigen_Rickettsia"/>
</dbReference>
<dbReference type="Pfam" id="PF16998">
    <property type="entry name" value="17kDa_Anti_2"/>
    <property type="match status" value="1"/>
</dbReference>
<dbReference type="Pfam" id="PF05433">
    <property type="entry name" value="Rick_17kDa_Anti"/>
    <property type="match status" value="1"/>
</dbReference>
<dbReference type="PIRSF" id="PIRSF002721">
    <property type="entry name" value="Surface_antigen_Rickettsia"/>
    <property type="match status" value="1"/>
</dbReference>
<dbReference type="PROSITE" id="PS51257">
    <property type="entry name" value="PROKAR_LIPOPROTEIN"/>
    <property type="match status" value="1"/>
</dbReference>
<organism>
    <name type="scientific">Rickettsia sibirica (strain ATCC VR-151 / 246)</name>
    <dbReference type="NCBI Taxonomy" id="272951"/>
    <lineage>
        <taxon>Bacteria</taxon>
        <taxon>Pseudomonadati</taxon>
        <taxon>Pseudomonadota</taxon>
        <taxon>Alphaproteobacteria</taxon>
        <taxon>Rickettsiales</taxon>
        <taxon>Rickettsiaceae</taxon>
        <taxon>Rickettsieae</taxon>
        <taxon>Rickettsia</taxon>
        <taxon>spotted fever group</taxon>
        <taxon>Rickettsia sibirica subgroup</taxon>
    </lineage>
</organism>
<name>17KD_RICS2</name>